<proteinExistence type="inferred from homology"/>
<keyword id="KW-0028">Amino-acid biosynthesis</keyword>
<keyword id="KW-0963">Cytoplasm</keyword>
<keyword id="KW-0554">One-carbon metabolism</keyword>
<keyword id="KW-0663">Pyridoxal phosphate</keyword>
<keyword id="KW-0808">Transferase</keyword>
<feature type="chain" id="PRO_1000091550" description="Serine hydroxymethyltransferase">
    <location>
        <begin position="1"/>
        <end position="410"/>
    </location>
</feature>
<feature type="binding site" evidence="1">
    <location>
        <position position="116"/>
    </location>
    <ligand>
        <name>(6S)-5,6,7,8-tetrahydrofolate</name>
        <dbReference type="ChEBI" id="CHEBI:57453"/>
    </ligand>
</feature>
<feature type="binding site" evidence="1">
    <location>
        <begin position="120"/>
        <end position="122"/>
    </location>
    <ligand>
        <name>(6S)-5,6,7,8-tetrahydrofolate</name>
        <dbReference type="ChEBI" id="CHEBI:57453"/>
    </ligand>
</feature>
<feature type="site" description="Plays an important role in substrate specificity" evidence="1">
    <location>
        <position position="224"/>
    </location>
</feature>
<feature type="modified residue" description="N6-(pyridoxal phosphate)lysine" evidence="1">
    <location>
        <position position="225"/>
    </location>
</feature>
<protein>
    <recommendedName>
        <fullName evidence="1">Serine hydroxymethyltransferase</fullName>
        <shortName evidence="1">SHMT</shortName>
        <shortName evidence="1">Serine methylase</shortName>
        <ecNumber evidence="1">2.1.2.1</ecNumber>
    </recommendedName>
</protein>
<evidence type="ECO:0000255" key="1">
    <source>
        <dbReference type="HAMAP-Rule" id="MF_00051"/>
    </source>
</evidence>
<sequence>MDFMAQDPEVFGAIHNEEERQEHNIELIASENIVSPAVRAAQGSVLTNKYSEGYPGHRYYGGNQYIDVVENLAIDRAKKLFGAEFANVQPHSGSQANMATYRAFLEDGDKVLAMDLTDGGHLTHGSPVSFSGQEYHFYHYGLDPKTERLNYAKIREQAEQVQPRMIVAGASAYSREIDFKKFREIADHVGAFLMVDMAHIAGLVAAGLHMNPVPYADVVTTTTHKTLRGPRGGLILAKAQYGKAINSALFPGIQGGPLDHVVAAKAVALGEALQPSFKTYAQHILDNMQAMVSGFEEDPHLRLISGGSDNHMVLIDVTGYGVNGRQVQDLLDEVGITTNKNQIPGEQNGPFKTSGIRVGTAAITTRGFTADESKRVGELISAAIAQRDDQPALDQIHQEVLALTARHPLS</sequence>
<dbReference type="EC" id="2.1.2.1" evidence="1"/>
<dbReference type="EMBL" id="FM177140">
    <property type="protein sequence ID" value="CAQ66461.1"/>
    <property type="molecule type" value="Genomic_DNA"/>
</dbReference>
<dbReference type="SMR" id="B3WDL0"/>
<dbReference type="KEGG" id="lcb:LCABL_13800"/>
<dbReference type="HOGENOM" id="CLU_022477_2_1_9"/>
<dbReference type="UniPathway" id="UPA00193"/>
<dbReference type="UniPathway" id="UPA00288">
    <property type="reaction ID" value="UER01023"/>
</dbReference>
<dbReference type="GO" id="GO:0005829">
    <property type="term" value="C:cytosol"/>
    <property type="evidence" value="ECO:0007669"/>
    <property type="project" value="TreeGrafter"/>
</dbReference>
<dbReference type="GO" id="GO:0004372">
    <property type="term" value="F:glycine hydroxymethyltransferase activity"/>
    <property type="evidence" value="ECO:0007669"/>
    <property type="project" value="UniProtKB-UniRule"/>
</dbReference>
<dbReference type="GO" id="GO:0030170">
    <property type="term" value="F:pyridoxal phosphate binding"/>
    <property type="evidence" value="ECO:0007669"/>
    <property type="project" value="UniProtKB-UniRule"/>
</dbReference>
<dbReference type="GO" id="GO:0019264">
    <property type="term" value="P:glycine biosynthetic process from serine"/>
    <property type="evidence" value="ECO:0007669"/>
    <property type="project" value="UniProtKB-UniRule"/>
</dbReference>
<dbReference type="GO" id="GO:0035999">
    <property type="term" value="P:tetrahydrofolate interconversion"/>
    <property type="evidence" value="ECO:0007669"/>
    <property type="project" value="UniProtKB-UniRule"/>
</dbReference>
<dbReference type="CDD" id="cd00378">
    <property type="entry name" value="SHMT"/>
    <property type="match status" value="1"/>
</dbReference>
<dbReference type="FunFam" id="3.40.640.10:FF:000001">
    <property type="entry name" value="Serine hydroxymethyltransferase"/>
    <property type="match status" value="1"/>
</dbReference>
<dbReference type="Gene3D" id="3.90.1150.10">
    <property type="entry name" value="Aspartate Aminotransferase, domain 1"/>
    <property type="match status" value="1"/>
</dbReference>
<dbReference type="Gene3D" id="3.40.640.10">
    <property type="entry name" value="Type I PLP-dependent aspartate aminotransferase-like (Major domain)"/>
    <property type="match status" value="1"/>
</dbReference>
<dbReference type="HAMAP" id="MF_00051">
    <property type="entry name" value="SHMT"/>
    <property type="match status" value="1"/>
</dbReference>
<dbReference type="InterPro" id="IPR015424">
    <property type="entry name" value="PyrdxlP-dep_Trfase"/>
</dbReference>
<dbReference type="InterPro" id="IPR015421">
    <property type="entry name" value="PyrdxlP-dep_Trfase_major"/>
</dbReference>
<dbReference type="InterPro" id="IPR015422">
    <property type="entry name" value="PyrdxlP-dep_Trfase_small"/>
</dbReference>
<dbReference type="InterPro" id="IPR001085">
    <property type="entry name" value="Ser_HO-MeTrfase"/>
</dbReference>
<dbReference type="InterPro" id="IPR049943">
    <property type="entry name" value="Ser_HO-MeTrfase-like"/>
</dbReference>
<dbReference type="InterPro" id="IPR019798">
    <property type="entry name" value="Ser_HO-MeTrfase_PLP_BS"/>
</dbReference>
<dbReference type="InterPro" id="IPR039429">
    <property type="entry name" value="SHMT-like_dom"/>
</dbReference>
<dbReference type="NCBIfam" id="NF000586">
    <property type="entry name" value="PRK00011.1"/>
    <property type="match status" value="1"/>
</dbReference>
<dbReference type="PANTHER" id="PTHR11680">
    <property type="entry name" value="SERINE HYDROXYMETHYLTRANSFERASE"/>
    <property type="match status" value="1"/>
</dbReference>
<dbReference type="PANTHER" id="PTHR11680:SF35">
    <property type="entry name" value="SERINE HYDROXYMETHYLTRANSFERASE 1"/>
    <property type="match status" value="1"/>
</dbReference>
<dbReference type="Pfam" id="PF00464">
    <property type="entry name" value="SHMT"/>
    <property type="match status" value="1"/>
</dbReference>
<dbReference type="PIRSF" id="PIRSF000412">
    <property type="entry name" value="SHMT"/>
    <property type="match status" value="1"/>
</dbReference>
<dbReference type="SUPFAM" id="SSF53383">
    <property type="entry name" value="PLP-dependent transferases"/>
    <property type="match status" value="1"/>
</dbReference>
<dbReference type="PROSITE" id="PS00096">
    <property type="entry name" value="SHMT"/>
    <property type="match status" value="1"/>
</dbReference>
<organism>
    <name type="scientific">Lacticaseibacillus casei (strain BL23)</name>
    <name type="common">Lactobacillus casei</name>
    <dbReference type="NCBI Taxonomy" id="543734"/>
    <lineage>
        <taxon>Bacteria</taxon>
        <taxon>Bacillati</taxon>
        <taxon>Bacillota</taxon>
        <taxon>Bacilli</taxon>
        <taxon>Lactobacillales</taxon>
        <taxon>Lactobacillaceae</taxon>
        <taxon>Lacticaseibacillus</taxon>
    </lineage>
</organism>
<comment type="function">
    <text evidence="1">Catalyzes the reversible interconversion of serine and glycine with tetrahydrofolate (THF) serving as the one-carbon carrier. This reaction serves as the major source of one-carbon groups required for the biosynthesis of purines, thymidylate, methionine, and other important biomolecules. Also exhibits THF-independent aldolase activity toward beta-hydroxyamino acids, producing glycine and aldehydes, via a retro-aldol mechanism.</text>
</comment>
<comment type="catalytic activity">
    <reaction evidence="1">
        <text>(6R)-5,10-methylene-5,6,7,8-tetrahydrofolate + glycine + H2O = (6S)-5,6,7,8-tetrahydrofolate + L-serine</text>
        <dbReference type="Rhea" id="RHEA:15481"/>
        <dbReference type="ChEBI" id="CHEBI:15377"/>
        <dbReference type="ChEBI" id="CHEBI:15636"/>
        <dbReference type="ChEBI" id="CHEBI:33384"/>
        <dbReference type="ChEBI" id="CHEBI:57305"/>
        <dbReference type="ChEBI" id="CHEBI:57453"/>
        <dbReference type="EC" id="2.1.2.1"/>
    </reaction>
</comment>
<comment type="cofactor">
    <cofactor evidence="1">
        <name>pyridoxal 5'-phosphate</name>
        <dbReference type="ChEBI" id="CHEBI:597326"/>
    </cofactor>
</comment>
<comment type="pathway">
    <text evidence="1">One-carbon metabolism; tetrahydrofolate interconversion.</text>
</comment>
<comment type="pathway">
    <text evidence="1">Amino-acid biosynthesis; glycine biosynthesis; glycine from L-serine: step 1/1.</text>
</comment>
<comment type="subunit">
    <text evidence="1">Homodimer.</text>
</comment>
<comment type="subcellular location">
    <subcellularLocation>
        <location evidence="1">Cytoplasm</location>
    </subcellularLocation>
</comment>
<comment type="similarity">
    <text evidence="1">Belongs to the SHMT family.</text>
</comment>
<accession>B3WDL0</accession>
<reference key="1">
    <citation type="submission" date="2008-06" db="EMBL/GenBank/DDBJ databases">
        <title>Lactobacillus casei BL23 complete genome sequence.</title>
        <authorList>
            <person name="Maze A."/>
            <person name="Boel G."/>
            <person name="Bourand A."/>
            <person name="Loux V."/>
            <person name="Gibrat J.F."/>
            <person name="Zuniga M."/>
            <person name="Hartke A."/>
            <person name="Deutscher J."/>
        </authorList>
    </citation>
    <scope>NUCLEOTIDE SEQUENCE [LARGE SCALE GENOMIC DNA]</scope>
    <source>
        <strain>BL23</strain>
    </source>
</reference>
<name>GLYA_LACCB</name>
<gene>
    <name evidence="1" type="primary">glyA</name>
    <name type="ordered locus">LCABL_13800</name>
</gene>